<dbReference type="EC" id="2.7.11.13" evidence="3"/>
<dbReference type="EMBL" id="M18330">
    <property type="protein sequence ID" value="AAA41871.1"/>
    <property type="molecule type" value="mRNA"/>
</dbReference>
<dbReference type="EMBL" id="AJ230617">
    <property type="protein sequence ID" value="CAB75578.1"/>
    <property type="molecule type" value="Genomic_DNA"/>
</dbReference>
<dbReference type="EMBL" id="AJ230618">
    <property type="protein sequence ID" value="CAB75578.1"/>
    <property type="status" value="JOINED"/>
    <property type="molecule type" value="Genomic_DNA"/>
</dbReference>
<dbReference type="EMBL" id="AJ230619">
    <property type="protein sequence ID" value="CAB75578.1"/>
    <property type="status" value="JOINED"/>
    <property type="molecule type" value="Genomic_DNA"/>
</dbReference>
<dbReference type="EMBL" id="AJ230620">
    <property type="protein sequence ID" value="CAB75578.1"/>
    <property type="status" value="JOINED"/>
    <property type="molecule type" value="Genomic_DNA"/>
</dbReference>
<dbReference type="EMBL" id="AJ230621">
    <property type="protein sequence ID" value="CAB75578.1"/>
    <property type="status" value="JOINED"/>
    <property type="molecule type" value="Genomic_DNA"/>
</dbReference>
<dbReference type="EMBL" id="AJ230622">
    <property type="protein sequence ID" value="CAB75578.1"/>
    <property type="status" value="JOINED"/>
    <property type="molecule type" value="Genomic_DNA"/>
</dbReference>
<dbReference type="EMBL" id="AJ230623">
    <property type="protein sequence ID" value="CAB75578.1"/>
    <property type="status" value="JOINED"/>
    <property type="molecule type" value="Genomic_DNA"/>
</dbReference>
<dbReference type="EMBL" id="AJ230624">
    <property type="protein sequence ID" value="CAB75578.1"/>
    <property type="status" value="JOINED"/>
    <property type="molecule type" value="Genomic_DNA"/>
</dbReference>
<dbReference type="EMBL" id="AJ230625">
    <property type="protein sequence ID" value="CAB75578.1"/>
    <property type="status" value="JOINED"/>
    <property type="molecule type" value="Genomic_DNA"/>
</dbReference>
<dbReference type="EMBL" id="AJ230626">
    <property type="protein sequence ID" value="CAB75578.1"/>
    <property type="status" value="JOINED"/>
    <property type="molecule type" value="Genomic_DNA"/>
</dbReference>
<dbReference type="EMBL" id="AJ230627">
    <property type="protein sequence ID" value="CAB75578.1"/>
    <property type="status" value="JOINED"/>
    <property type="molecule type" value="Genomic_DNA"/>
</dbReference>
<dbReference type="EMBL" id="AJ230628">
    <property type="protein sequence ID" value="CAB75578.1"/>
    <property type="status" value="JOINED"/>
    <property type="molecule type" value="Genomic_DNA"/>
</dbReference>
<dbReference type="EMBL" id="AJ230629">
    <property type="protein sequence ID" value="CAB75578.1"/>
    <property type="status" value="JOINED"/>
    <property type="molecule type" value="Genomic_DNA"/>
</dbReference>
<dbReference type="EMBL" id="AJ230630">
    <property type="protein sequence ID" value="CAB75578.1"/>
    <property type="status" value="JOINED"/>
    <property type="molecule type" value="Genomic_DNA"/>
</dbReference>
<dbReference type="EMBL" id="AJ230631">
    <property type="protein sequence ID" value="CAB75578.1"/>
    <property type="status" value="JOINED"/>
    <property type="molecule type" value="Genomic_DNA"/>
</dbReference>
<dbReference type="EMBL" id="AJ230632">
    <property type="protein sequence ID" value="CAB75578.1"/>
    <property type="status" value="JOINED"/>
    <property type="molecule type" value="Genomic_DNA"/>
</dbReference>
<dbReference type="EMBL" id="AJ230633">
    <property type="protein sequence ID" value="CAB75578.1"/>
    <property type="status" value="JOINED"/>
    <property type="molecule type" value="Genomic_DNA"/>
</dbReference>
<dbReference type="EMBL" id="AF219629">
    <property type="protein sequence ID" value="AAF32345.1"/>
    <property type="molecule type" value="mRNA"/>
</dbReference>
<dbReference type="EMBL" id="BC076505">
    <property type="protein sequence ID" value="AAH76505.1"/>
    <property type="molecule type" value="mRNA"/>
</dbReference>
<dbReference type="PIR" id="A28163">
    <property type="entry name" value="KIRTCD"/>
</dbReference>
<dbReference type="RefSeq" id="NP_579841.1">
    <property type="nucleotide sequence ID" value="NM_133307.1"/>
</dbReference>
<dbReference type="PDB" id="1BDY">
    <property type="method" value="X-ray"/>
    <property type="resolution" value="2.20 A"/>
    <property type="chains" value="A/B=1-123"/>
</dbReference>
<dbReference type="PDB" id="7KND">
    <property type="method" value="X-ray"/>
    <property type="resolution" value="1.39 A"/>
    <property type="chains" value="A=229-281"/>
</dbReference>
<dbReference type="PDB" id="7KNJ">
    <property type="method" value="X-ray"/>
    <property type="resolution" value="1.57 A"/>
    <property type="chains" value="A=229-281"/>
</dbReference>
<dbReference type="PDB" id="7KO6">
    <property type="method" value="X-ray"/>
    <property type="resolution" value="1.80 A"/>
    <property type="chains" value="A=229-281"/>
</dbReference>
<dbReference type="PDB" id="7L92">
    <property type="method" value="X-ray"/>
    <property type="resolution" value="1.75 A"/>
    <property type="chains" value="A/D/G/J/M/P/S/V=229-281"/>
</dbReference>
<dbReference type="PDB" id="7LCB">
    <property type="method" value="X-ray"/>
    <property type="resolution" value="1.70 A"/>
    <property type="chains" value="A=229-281"/>
</dbReference>
<dbReference type="PDB" id="7LEO">
    <property type="method" value="X-ray"/>
    <property type="resolution" value="1.65 A"/>
    <property type="chains" value="A/D=229-281"/>
</dbReference>
<dbReference type="PDB" id="7LF3">
    <property type="method" value="X-ray"/>
    <property type="resolution" value="1.13 A"/>
    <property type="chains" value="A=229-281"/>
</dbReference>
<dbReference type="PDBsum" id="1BDY"/>
<dbReference type="PDBsum" id="7KND"/>
<dbReference type="PDBsum" id="7KNJ"/>
<dbReference type="PDBsum" id="7KO6"/>
<dbReference type="PDBsum" id="7L92"/>
<dbReference type="PDBsum" id="7LCB"/>
<dbReference type="PDBsum" id="7LEO"/>
<dbReference type="PDBsum" id="7LF3"/>
<dbReference type="SMR" id="P09215"/>
<dbReference type="BioGRID" id="250924">
    <property type="interactions" value="10"/>
</dbReference>
<dbReference type="FunCoup" id="P09215">
    <property type="interactions" value="1065"/>
</dbReference>
<dbReference type="IntAct" id="P09215">
    <property type="interactions" value="6"/>
</dbReference>
<dbReference type="STRING" id="10116.ENSRNOP00000025858"/>
<dbReference type="BindingDB" id="P09215"/>
<dbReference type="ChEMBL" id="CHEMBL3633"/>
<dbReference type="DrugCentral" id="P09215"/>
<dbReference type="GlyGen" id="P09215">
    <property type="glycosylation" value="4 sites, 1 O-linked glycan (4 sites)"/>
</dbReference>
<dbReference type="iPTMnet" id="P09215"/>
<dbReference type="PhosphoSitePlus" id="P09215"/>
<dbReference type="jPOST" id="P09215"/>
<dbReference type="PaxDb" id="10116-ENSRNOP00000025858"/>
<dbReference type="GeneID" id="170538"/>
<dbReference type="KEGG" id="rno:170538"/>
<dbReference type="UCSC" id="RGD:67383">
    <molecule id="P09215-1"/>
    <property type="organism name" value="rat"/>
</dbReference>
<dbReference type="AGR" id="RGD:67383"/>
<dbReference type="CTD" id="5580"/>
<dbReference type="RGD" id="67383">
    <property type="gene designation" value="Prkcd"/>
</dbReference>
<dbReference type="eggNOG" id="KOG0694">
    <property type="taxonomic scope" value="Eukaryota"/>
</dbReference>
<dbReference type="InParanoid" id="P09215"/>
<dbReference type="PhylomeDB" id="P09215"/>
<dbReference type="BRENDA" id="2.7.11.13">
    <property type="organism ID" value="5301"/>
</dbReference>
<dbReference type="Reactome" id="R-RNO-111465">
    <property type="pathway name" value="Apoptotic cleavage of cellular proteins"/>
</dbReference>
<dbReference type="Reactome" id="R-RNO-111933">
    <property type="pathway name" value="Calmodulin induced events"/>
</dbReference>
<dbReference type="Reactome" id="R-RNO-114508">
    <property type="pathway name" value="Effects of PIP2 hydrolysis"/>
</dbReference>
<dbReference type="Reactome" id="R-RNO-1250196">
    <property type="pathway name" value="SHC1 events in ERBB2 signaling"/>
</dbReference>
<dbReference type="Reactome" id="R-RNO-1489509">
    <property type="pathway name" value="DAG and IP3 signaling"/>
</dbReference>
<dbReference type="Reactome" id="R-RNO-2029485">
    <property type="pathway name" value="Role of phospholipids in phagocytosis"/>
</dbReference>
<dbReference type="Reactome" id="R-RNO-450520">
    <property type="pathway name" value="HuR (ELAVL1) binds and stabilizes mRNA"/>
</dbReference>
<dbReference type="Reactome" id="R-RNO-5218921">
    <property type="pathway name" value="VEGFR2 mediated cell proliferation"/>
</dbReference>
<dbReference type="Reactome" id="R-RNO-5607764">
    <property type="pathway name" value="CLEC7A (Dectin-1) signaling"/>
</dbReference>
<dbReference type="Reactome" id="R-RNO-5668599">
    <property type="pathway name" value="RHO GTPases Activate NADPH Oxidases"/>
</dbReference>
<dbReference type="Reactome" id="R-RNO-6798695">
    <property type="pathway name" value="Neutrophil degranulation"/>
</dbReference>
<dbReference type="Reactome" id="R-RNO-877300">
    <property type="pathway name" value="Interferon gamma signaling"/>
</dbReference>
<dbReference type="EvolutionaryTrace" id="P09215"/>
<dbReference type="PRO" id="PR:P09215"/>
<dbReference type="Proteomes" id="UP000002494">
    <property type="component" value="Unplaced"/>
</dbReference>
<dbReference type="GO" id="GO:0005911">
    <property type="term" value="C:cell-cell junction"/>
    <property type="evidence" value="ECO:0000266"/>
    <property type="project" value="RGD"/>
</dbReference>
<dbReference type="GO" id="GO:0005737">
    <property type="term" value="C:cytoplasm"/>
    <property type="evidence" value="ECO:0000266"/>
    <property type="project" value="RGD"/>
</dbReference>
<dbReference type="GO" id="GO:0005829">
    <property type="term" value="C:cytosol"/>
    <property type="evidence" value="ECO:0000266"/>
    <property type="project" value="RGD"/>
</dbReference>
<dbReference type="GO" id="GO:0036019">
    <property type="term" value="C:endolysosome"/>
    <property type="evidence" value="ECO:0000250"/>
    <property type="project" value="UniProtKB"/>
</dbReference>
<dbReference type="GO" id="GO:0005783">
    <property type="term" value="C:endoplasmic reticulum"/>
    <property type="evidence" value="ECO:0000250"/>
    <property type="project" value="UniProtKB"/>
</dbReference>
<dbReference type="GO" id="GO:0016020">
    <property type="term" value="C:membrane"/>
    <property type="evidence" value="ECO:0000266"/>
    <property type="project" value="RGD"/>
</dbReference>
<dbReference type="GO" id="GO:0005739">
    <property type="term" value="C:mitochondrion"/>
    <property type="evidence" value="ECO:0007669"/>
    <property type="project" value="UniProtKB-SubCell"/>
</dbReference>
<dbReference type="GO" id="GO:0016363">
    <property type="term" value="C:nuclear matrix"/>
    <property type="evidence" value="ECO:0000266"/>
    <property type="project" value="RGD"/>
</dbReference>
<dbReference type="GO" id="GO:0005634">
    <property type="term" value="C:nucleus"/>
    <property type="evidence" value="ECO:0000266"/>
    <property type="project" value="RGD"/>
</dbReference>
<dbReference type="GO" id="GO:0048471">
    <property type="term" value="C:perinuclear region of cytoplasm"/>
    <property type="evidence" value="ECO:0007669"/>
    <property type="project" value="UniProtKB-SubCell"/>
</dbReference>
<dbReference type="GO" id="GO:0005886">
    <property type="term" value="C:plasma membrane"/>
    <property type="evidence" value="ECO:0000266"/>
    <property type="project" value="RGD"/>
</dbReference>
<dbReference type="GO" id="GO:0099524">
    <property type="term" value="C:postsynaptic cytosol"/>
    <property type="evidence" value="ECO:0000314"/>
    <property type="project" value="SynGO"/>
</dbReference>
<dbReference type="GO" id="GO:0005524">
    <property type="term" value="F:ATP binding"/>
    <property type="evidence" value="ECO:0007669"/>
    <property type="project" value="UniProtKB-KW"/>
</dbReference>
<dbReference type="GO" id="GO:0004697">
    <property type="term" value="F:diacylglycerol-dependent serine/threonine kinase activity"/>
    <property type="evidence" value="ECO:0000269"/>
    <property type="project" value="Reactome"/>
</dbReference>
<dbReference type="GO" id="GO:0004699">
    <property type="term" value="F:diacylglycerol-dependent, calcium-independent serine/threonine kinase activity"/>
    <property type="evidence" value="ECO:0000314"/>
    <property type="project" value="RGD"/>
</dbReference>
<dbReference type="GO" id="GO:0008047">
    <property type="term" value="F:enzyme activator activity"/>
    <property type="evidence" value="ECO:0000266"/>
    <property type="project" value="RGD"/>
</dbReference>
<dbReference type="GO" id="GO:0019899">
    <property type="term" value="F:enzyme binding"/>
    <property type="evidence" value="ECO:0000266"/>
    <property type="project" value="RGD"/>
</dbReference>
<dbReference type="GO" id="GO:0043560">
    <property type="term" value="F:insulin receptor substrate binding"/>
    <property type="evidence" value="ECO:0000266"/>
    <property type="project" value="RGD"/>
</dbReference>
<dbReference type="GO" id="GO:0004672">
    <property type="term" value="F:protein kinase activity"/>
    <property type="evidence" value="ECO:0000266"/>
    <property type="project" value="RGD"/>
</dbReference>
<dbReference type="GO" id="GO:0019901">
    <property type="term" value="F:protein kinase binding"/>
    <property type="evidence" value="ECO:0000353"/>
    <property type="project" value="RGD"/>
</dbReference>
<dbReference type="GO" id="GO:0106310">
    <property type="term" value="F:protein serine kinase activity"/>
    <property type="evidence" value="ECO:0000250"/>
    <property type="project" value="UniProtKB"/>
</dbReference>
<dbReference type="GO" id="GO:0004674">
    <property type="term" value="F:protein serine/threonine kinase activity"/>
    <property type="evidence" value="ECO:0000266"/>
    <property type="project" value="RGD"/>
</dbReference>
<dbReference type="GO" id="GO:0120283">
    <property type="term" value="F:protein serine/threonine kinase binding"/>
    <property type="evidence" value="ECO:0000353"/>
    <property type="project" value="RGD"/>
</dbReference>
<dbReference type="GO" id="GO:0004713">
    <property type="term" value="F:protein tyrosine kinase activity"/>
    <property type="evidence" value="ECO:0007669"/>
    <property type="project" value="RHEA"/>
</dbReference>
<dbReference type="GO" id="GO:0070976">
    <property type="term" value="F:TIR domain binding"/>
    <property type="evidence" value="ECO:0000353"/>
    <property type="project" value="BHF-UCL"/>
</dbReference>
<dbReference type="GO" id="GO:0008270">
    <property type="term" value="F:zinc ion binding"/>
    <property type="evidence" value="ECO:0007669"/>
    <property type="project" value="UniProtKB-KW"/>
</dbReference>
<dbReference type="GO" id="GO:0006915">
    <property type="term" value="P:apoptotic process"/>
    <property type="evidence" value="ECO:0000315"/>
    <property type="project" value="CACAO"/>
</dbReference>
<dbReference type="GO" id="GO:0042100">
    <property type="term" value="P:B cell proliferation"/>
    <property type="evidence" value="ECO:0000266"/>
    <property type="project" value="RGD"/>
</dbReference>
<dbReference type="GO" id="GO:0060326">
    <property type="term" value="P:cell chemotaxis"/>
    <property type="evidence" value="ECO:0000266"/>
    <property type="project" value="RGD"/>
</dbReference>
<dbReference type="GO" id="GO:1904385">
    <property type="term" value="P:cellular response to angiotensin"/>
    <property type="evidence" value="ECO:0000250"/>
    <property type="project" value="UniProtKB"/>
</dbReference>
<dbReference type="GO" id="GO:0042149">
    <property type="term" value="P:cellular response to glucose starvation"/>
    <property type="evidence" value="ECO:0000270"/>
    <property type="project" value="RGD"/>
</dbReference>
<dbReference type="GO" id="GO:0070301">
    <property type="term" value="P:cellular response to hydrogen peroxide"/>
    <property type="evidence" value="ECO:0000266"/>
    <property type="project" value="RGD"/>
</dbReference>
<dbReference type="GO" id="GO:0071447">
    <property type="term" value="P:cellular response to hydroperoxide"/>
    <property type="evidence" value="ECO:0000266"/>
    <property type="project" value="RGD"/>
</dbReference>
<dbReference type="GO" id="GO:0032869">
    <property type="term" value="P:cellular response to insulin stimulus"/>
    <property type="evidence" value="ECO:0000270"/>
    <property type="project" value="RGD"/>
</dbReference>
<dbReference type="GO" id="GO:0034599">
    <property type="term" value="P:cellular response to oxidative stress"/>
    <property type="evidence" value="ECO:0000314"/>
    <property type="project" value="CACAO"/>
</dbReference>
<dbReference type="GO" id="GO:0034644">
    <property type="term" value="P:cellular response to UV"/>
    <property type="evidence" value="ECO:0000250"/>
    <property type="project" value="UniProtKB"/>
</dbReference>
<dbReference type="GO" id="GO:0090398">
    <property type="term" value="P:cellular senescence"/>
    <property type="evidence" value="ECO:0000266"/>
    <property type="project" value="RGD"/>
</dbReference>
<dbReference type="GO" id="GO:0032963">
    <property type="term" value="P:collagen metabolic process"/>
    <property type="evidence" value="ECO:0000315"/>
    <property type="project" value="RGD"/>
</dbReference>
<dbReference type="GO" id="GO:0070779">
    <property type="term" value="P:D-aspartate import across plasma membrane"/>
    <property type="evidence" value="ECO:0000315"/>
    <property type="project" value="RGD"/>
</dbReference>
<dbReference type="GO" id="GO:0042742">
    <property type="term" value="P:defense response to bacterium"/>
    <property type="evidence" value="ECO:0000250"/>
    <property type="project" value="UniProtKB"/>
</dbReference>
<dbReference type="GO" id="GO:0006974">
    <property type="term" value="P:DNA damage response"/>
    <property type="evidence" value="ECO:0000266"/>
    <property type="project" value="RGD"/>
</dbReference>
<dbReference type="GO" id="GO:0016064">
    <property type="term" value="P:immunoglobulin mediated immune response"/>
    <property type="evidence" value="ECO:0000266"/>
    <property type="project" value="RGD"/>
</dbReference>
<dbReference type="GO" id="GO:0035556">
    <property type="term" value="P:intracellular signal transduction"/>
    <property type="evidence" value="ECO:0000314"/>
    <property type="project" value="RGD"/>
</dbReference>
<dbReference type="GO" id="GO:0030837">
    <property type="term" value="P:negative regulation of actin filament polymerization"/>
    <property type="evidence" value="ECO:0000250"/>
    <property type="project" value="UniProtKB"/>
</dbReference>
<dbReference type="GO" id="GO:0051490">
    <property type="term" value="P:negative regulation of filopodium assembly"/>
    <property type="evidence" value="ECO:0000250"/>
    <property type="project" value="UniProtKB"/>
</dbReference>
<dbReference type="GO" id="GO:0034351">
    <property type="term" value="P:negative regulation of glial cell apoptotic process"/>
    <property type="evidence" value="ECO:0000250"/>
    <property type="project" value="UniProtKB"/>
</dbReference>
<dbReference type="GO" id="GO:0050728">
    <property type="term" value="P:negative regulation of inflammatory response"/>
    <property type="evidence" value="ECO:0000266"/>
    <property type="project" value="RGD"/>
</dbReference>
<dbReference type="GO" id="GO:0046627">
    <property type="term" value="P:negative regulation of insulin receptor signaling pathway"/>
    <property type="evidence" value="ECO:0000266"/>
    <property type="project" value="RGD"/>
</dbReference>
<dbReference type="GO" id="GO:0043409">
    <property type="term" value="P:negative regulation of MAPK cascade"/>
    <property type="evidence" value="ECO:0000266"/>
    <property type="project" value="RGD"/>
</dbReference>
<dbReference type="GO" id="GO:0090331">
    <property type="term" value="P:negative regulation of platelet aggregation"/>
    <property type="evidence" value="ECO:0000250"/>
    <property type="project" value="UniProtKB"/>
</dbReference>
<dbReference type="GO" id="GO:0042119">
    <property type="term" value="P:neutrophil activation"/>
    <property type="evidence" value="ECO:0000266"/>
    <property type="project" value="RGD"/>
</dbReference>
<dbReference type="GO" id="GO:0018105">
    <property type="term" value="P:peptidyl-serine phosphorylation"/>
    <property type="evidence" value="ECO:0000250"/>
    <property type="project" value="UniProtKB"/>
</dbReference>
<dbReference type="GO" id="GO:0043065">
    <property type="term" value="P:positive regulation of apoptotic process"/>
    <property type="evidence" value="ECO:0000315"/>
    <property type="project" value="RGD"/>
</dbReference>
<dbReference type="GO" id="GO:2001235">
    <property type="term" value="P:positive regulation of apoptotic signaling pathway"/>
    <property type="evidence" value="ECO:0000266"/>
    <property type="project" value="RGD"/>
</dbReference>
<dbReference type="GO" id="GO:2000304">
    <property type="term" value="P:positive regulation of ceramide biosynthetic process"/>
    <property type="evidence" value="ECO:0000266"/>
    <property type="project" value="RGD"/>
</dbReference>
<dbReference type="GO" id="GO:0046326">
    <property type="term" value="P:positive regulation of D-glucose import"/>
    <property type="evidence" value="ECO:0000315"/>
    <property type="project" value="RGD"/>
</dbReference>
<dbReference type="GO" id="GO:2000753">
    <property type="term" value="P:positive regulation of glucosylceramide catabolic process"/>
    <property type="evidence" value="ECO:0000266"/>
    <property type="project" value="RGD"/>
</dbReference>
<dbReference type="GO" id="GO:0043410">
    <property type="term" value="P:positive regulation of MAPK cascade"/>
    <property type="evidence" value="ECO:0000315"/>
    <property type="project" value="RGD"/>
</dbReference>
<dbReference type="GO" id="GO:0042307">
    <property type="term" value="P:positive regulation of protein import into nucleus"/>
    <property type="evidence" value="ECO:0000266"/>
    <property type="project" value="RGD"/>
</dbReference>
<dbReference type="GO" id="GO:2000755">
    <property type="term" value="P:positive regulation of sphingomyelin catabolic process"/>
    <property type="evidence" value="ECO:0000266"/>
    <property type="project" value="RGD"/>
</dbReference>
<dbReference type="GO" id="GO:0032930">
    <property type="term" value="P:positive regulation of superoxide anion generation"/>
    <property type="evidence" value="ECO:0000250"/>
    <property type="project" value="UniProtKB"/>
</dbReference>
<dbReference type="GO" id="GO:0043687">
    <property type="term" value="P:post-translational protein modification"/>
    <property type="evidence" value="ECO:0000266"/>
    <property type="project" value="RGD"/>
</dbReference>
<dbReference type="GO" id="GO:0032956">
    <property type="term" value="P:regulation of actin cytoskeleton organization"/>
    <property type="evidence" value="ECO:0000266"/>
    <property type="project" value="RGD"/>
</dbReference>
<dbReference type="GO" id="GO:2000303">
    <property type="term" value="P:regulation of ceramide biosynthetic process"/>
    <property type="evidence" value="ECO:0000250"/>
    <property type="project" value="UniProtKB"/>
</dbReference>
<dbReference type="GO" id="GO:0042325">
    <property type="term" value="P:regulation of phosphorylation"/>
    <property type="evidence" value="ECO:0000314"/>
    <property type="project" value="CACAO"/>
</dbReference>
<dbReference type="GO" id="GO:0043200">
    <property type="term" value="P:response to amino acid"/>
    <property type="evidence" value="ECO:0000270"/>
    <property type="project" value="RGD"/>
</dbReference>
<dbReference type="GO" id="GO:0045471">
    <property type="term" value="P:response to ethanol"/>
    <property type="evidence" value="ECO:0000270"/>
    <property type="project" value="RGD"/>
</dbReference>
<dbReference type="GO" id="GO:0009749">
    <property type="term" value="P:response to glucose"/>
    <property type="evidence" value="ECO:0000270"/>
    <property type="project" value="RGD"/>
</dbReference>
<dbReference type="GO" id="GO:0042542">
    <property type="term" value="P:response to hydrogen peroxide"/>
    <property type="evidence" value="ECO:0000270"/>
    <property type="project" value="RGD"/>
</dbReference>
<dbReference type="GO" id="GO:0001666">
    <property type="term" value="P:response to hypoxia"/>
    <property type="evidence" value="ECO:0000270"/>
    <property type="project" value="RGD"/>
</dbReference>
<dbReference type="GO" id="GO:0009612">
    <property type="term" value="P:response to mechanical stimulus"/>
    <property type="evidence" value="ECO:0000270"/>
    <property type="project" value="RGD"/>
</dbReference>
<dbReference type="GO" id="GO:0006979">
    <property type="term" value="P:response to oxidative stress"/>
    <property type="evidence" value="ECO:0000315"/>
    <property type="project" value="RGD"/>
</dbReference>
<dbReference type="GO" id="GO:1904627">
    <property type="term" value="P:response to phorbol 13-acetate 12-myristate"/>
    <property type="evidence" value="ECO:0000270"/>
    <property type="project" value="RGD"/>
</dbReference>
<dbReference type="GO" id="GO:0009410">
    <property type="term" value="P:response to xenobiotic stimulus"/>
    <property type="evidence" value="ECO:0000270"/>
    <property type="project" value="RGD"/>
</dbReference>
<dbReference type="GO" id="GO:0023021">
    <property type="term" value="P:termination of signal transduction"/>
    <property type="evidence" value="ECO:0000266"/>
    <property type="project" value="RGD"/>
</dbReference>
<dbReference type="CDD" id="cd20834">
    <property type="entry name" value="C1_nPKC_theta-like_rpt1"/>
    <property type="match status" value="1"/>
</dbReference>
<dbReference type="CDD" id="cd20837">
    <property type="entry name" value="C1_nPKC_theta-like_rpt2"/>
    <property type="match status" value="1"/>
</dbReference>
<dbReference type="FunFam" id="3.30.200.20:FF:000360">
    <property type="entry name" value="Protein kinase C"/>
    <property type="match status" value="1"/>
</dbReference>
<dbReference type="FunFam" id="3.30.60.20:FF:000003">
    <property type="entry name" value="Protein kinase C delta"/>
    <property type="match status" value="1"/>
</dbReference>
<dbReference type="FunFam" id="2.60.40.150:FF:000049">
    <property type="entry name" value="Protein kinase C delta type"/>
    <property type="match status" value="1"/>
</dbReference>
<dbReference type="FunFam" id="3.30.60.20:FF:000008">
    <property type="entry name" value="Protein kinase C theta"/>
    <property type="match status" value="1"/>
</dbReference>
<dbReference type="FunFam" id="1.10.510.10:FF:000150">
    <property type="entry name" value="Protein kinase C, theta"/>
    <property type="match status" value="1"/>
</dbReference>
<dbReference type="Gene3D" id="3.30.60.20">
    <property type="match status" value="2"/>
</dbReference>
<dbReference type="Gene3D" id="2.60.40.150">
    <property type="entry name" value="C2 domain"/>
    <property type="match status" value="1"/>
</dbReference>
<dbReference type="Gene3D" id="3.30.200.20">
    <property type="entry name" value="Phosphorylase Kinase, domain 1"/>
    <property type="match status" value="1"/>
</dbReference>
<dbReference type="Gene3D" id="1.10.510.10">
    <property type="entry name" value="Transferase(Phosphotransferase) domain 1"/>
    <property type="match status" value="1"/>
</dbReference>
<dbReference type="InterPro" id="IPR000961">
    <property type="entry name" value="AGC-kinase_C"/>
</dbReference>
<dbReference type="InterPro" id="IPR046349">
    <property type="entry name" value="C1-like_sf"/>
</dbReference>
<dbReference type="InterPro" id="IPR000008">
    <property type="entry name" value="C2_dom"/>
</dbReference>
<dbReference type="InterPro" id="IPR035892">
    <property type="entry name" value="C2_domain_sf"/>
</dbReference>
<dbReference type="InterPro" id="IPR020454">
    <property type="entry name" value="DAG/PE-bd"/>
</dbReference>
<dbReference type="InterPro" id="IPR011009">
    <property type="entry name" value="Kinase-like_dom_sf"/>
</dbReference>
<dbReference type="InterPro" id="IPR002219">
    <property type="entry name" value="PE/DAG-bd"/>
</dbReference>
<dbReference type="InterPro" id="IPR027436">
    <property type="entry name" value="PKC_delta"/>
</dbReference>
<dbReference type="InterPro" id="IPR017892">
    <property type="entry name" value="Pkinase_C"/>
</dbReference>
<dbReference type="InterPro" id="IPR014376">
    <property type="entry name" value="Prot_kin_PKC_delta"/>
</dbReference>
<dbReference type="InterPro" id="IPR000719">
    <property type="entry name" value="Prot_kinase_dom"/>
</dbReference>
<dbReference type="InterPro" id="IPR017441">
    <property type="entry name" value="Protein_kinase_ATP_BS"/>
</dbReference>
<dbReference type="InterPro" id="IPR008271">
    <property type="entry name" value="Ser/Thr_kinase_AS"/>
</dbReference>
<dbReference type="PANTHER" id="PTHR24351">
    <property type="entry name" value="RIBOSOMAL PROTEIN S6 KINASE"/>
    <property type="match status" value="1"/>
</dbReference>
<dbReference type="Pfam" id="PF00130">
    <property type="entry name" value="C1_1"/>
    <property type="match status" value="2"/>
</dbReference>
<dbReference type="Pfam" id="PF21494">
    <property type="entry name" value="PKC_C2"/>
    <property type="match status" value="1"/>
</dbReference>
<dbReference type="Pfam" id="PF00069">
    <property type="entry name" value="Pkinase"/>
    <property type="match status" value="1"/>
</dbReference>
<dbReference type="Pfam" id="PF00433">
    <property type="entry name" value="Pkinase_C"/>
    <property type="match status" value="1"/>
</dbReference>
<dbReference type="PIRSF" id="PIRSF000551">
    <property type="entry name" value="PKC_delta"/>
    <property type="match status" value="1"/>
</dbReference>
<dbReference type="PIRSF" id="PIRSF501104">
    <property type="entry name" value="Protein_kin_C_delta"/>
    <property type="match status" value="1"/>
</dbReference>
<dbReference type="PRINTS" id="PR00008">
    <property type="entry name" value="DAGPEDOMAIN"/>
</dbReference>
<dbReference type="SMART" id="SM00109">
    <property type="entry name" value="C1"/>
    <property type="match status" value="2"/>
</dbReference>
<dbReference type="SMART" id="SM00133">
    <property type="entry name" value="S_TK_X"/>
    <property type="match status" value="1"/>
</dbReference>
<dbReference type="SMART" id="SM00220">
    <property type="entry name" value="S_TKc"/>
    <property type="match status" value="1"/>
</dbReference>
<dbReference type="SUPFAM" id="SSF49562">
    <property type="entry name" value="C2 domain (Calcium/lipid-binding domain, CaLB)"/>
    <property type="match status" value="1"/>
</dbReference>
<dbReference type="SUPFAM" id="SSF57889">
    <property type="entry name" value="Cysteine-rich domain"/>
    <property type="match status" value="2"/>
</dbReference>
<dbReference type="SUPFAM" id="SSF56112">
    <property type="entry name" value="Protein kinase-like (PK-like)"/>
    <property type="match status" value="1"/>
</dbReference>
<dbReference type="PROSITE" id="PS51285">
    <property type="entry name" value="AGC_KINASE_CTER"/>
    <property type="match status" value="1"/>
</dbReference>
<dbReference type="PROSITE" id="PS50004">
    <property type="entry name" value="C2"/>
    <property type="match status" value="1"/>
</dbReference>
<dbReference type="PROSITE" id="PS00107">
    <property type="entry name" value="PROTEIN_KINASE_ATP"/>
    <property type="match status" value="1"/>
</dbReference>
<dbReference type="PROSITE" id="PS50011">
    <property type="entry name" value="PROTEIN_KINASE_DOM"/>
    <property type="match status" value="1"/>
</dbReference>
<dbReference type="PROSITE" id="PS00108">
    <property type="entry name" value="PROTEIN_KINASE_ST"/>
    <property type="match status" value="1"/>
</dbReference>
<dbReference type="PROSITE" id="PS00479">
    <property type="entry name" value="ZF_DAG_PE_1"/>
    <property type="match status" value="2"/>
</dbReference>
<dbReference type="PROSITE" id="PS50081">
    <property type="entry name" value="ZF_DAG_PE_2"/>
    <property type="match status" value="2"/>
</dbReference>
<evidence type="ECO:0000250" key="1"/>
<evidence type="ECO:0000250" key="2">
    <source>
        <dbReference type="UniProtKB" id="P28867"/>
    </source>
</evidence>
<evidence type="ECO:0000250" key="3">
    <source>
        <dbReference type="UniProtKB" id="Q05655"/>
    </source>
</evidence>
<evidence type="ECO:0000255" key="4">
    <source>
        <dbReference type="PROSITE-ProRule" id="PRU00041"/>
    </source>
</evidence>
<evidence type="ECO:0000255" key="5">
    <source>
        <dbReference type="PROSITE-ProRule" id="PRU00159"/>
    </source>
</evidence>
<evidence type="ECO:0000255" key="6">
    <source>
        <dbReference type="PROSITE-ProRule" id="PRU00226"/>
    </source>
</evidence>
<evidence type="ECO:0000255" key="7">
    <source>
        <dbReference type="PROSITE-ProRule" id="PRU00618"/>
    </source>
</evidence>
<evidence type="ECO:0000255" key="8">
    <source>
        <dbReference type="PROSITE-ProRule" id="PRU10027"/>
    </source>
</evidence>
<evidence type="ECO:0000269" key="9">
    <source>
    </source>
</evidence>
<evidence type="ECO:0000269" key="10">
    <source>
    </source>
</evidence>
<evidence type="ECO:0000269" key="11">
    <source>
    </source>
</evidence>
<evidence type="ECO:0000269" key="12">
    <source>
    </source>
</evidence>
<evidence type="ECO:0000269" key="13">
    <source>
    </source>
</evidence>
<evidence type="ECO:0000303" key="14">
    <source>
    </source>
</evidence>
<evidence type="ECO:0000305" key="15"/>
<evidence type="ECO:0000312" key="16">
    <source>
        <dbReference type="RGD" id="67383"/>
    </source>
</evidence>
<evidence type="ECO:0007744" key="17">
    <source>
    </source>
</evidence>
<evidence type="ECO:0007744" key="18">
    <source>
    </source>
</evidence>
<evidence type="ECO:0007829" key="19">
    <source>
        <dbReference type="PDB" id="1BDY"/>
    </source>
</evidence>
<evidence type="ECO:0007829" key="20">
    <source>
        <dbReference type="PDB" id="7LF3"/>
    </source>
</evidence>
<keyword id="KW-0002">3D-structure</keyword>
<keyword id="KW-0025">Alternative splicing</keyword>
<keyword id="KW-0053">Apoptosis</keyword>
<keyword id="KW-0067">ATP-binding</keyword>
<keyword id="KW-0131">Cell cycle</keyword>
<keyword id="KW-1003">Cell membrane</keyword>
<keyword id="KW-0963">Cytoplasm</keyword>
<keyword id="KW-0903">Direct protein sequencing</keyword>
<keyword id="KW-0418">Kinase</keyword>
<keyword id="KW-0472">Membrane</keyword>
<keyword id="KW-0479">Metal-binding</keyword>
<keyword id="KW-0496">Mitochondrion</keyword>
<keyword id="KW-0547">Nucleotide-binding</keyword>
<keyword id="KW-0539">Nucleus</keyword>
<keyword id="KW-0597">Phosphoprotein</keyword>
<keyword id="KW-1185">Reference proteome</keyword>
<keyword id="KW-0677">Repeat</keyword>
<keyword id="KW-0723">Serine/threonine-protein kinase</keyword>
<keyword id="KW-0808">Transferase</keyword>
<keyword id="KW-0043">Tumor suppressor</keyword>
<keyword id="KW-0862">Zinc</keyword>
<keyword id="KW-0863">Zinc-finger</keyword>
<gene>
    <name evidence="16" type="primary">Prkcd</name>
    <name type="synonym">Pkcd</name>
</gene>
<comment type="function">
    <text evidence="2 3">Calcium-independent, phospholipid- and diacylglycerol (DAG)-dependent serine/threonine-protein kinase that plays contrasting roles in cell death and cell survival by functioning as a pro-apoptotic protein during DNA damage-induced apoptosis, but acting as an anti-apoptotic protein during cytokine receptor-initiated cell death, is involved in tumor suppression, is required for oxygen radical production by NADPH oxidase and acts as a positive or negative regulator in platelet functional responses. Upon DNA damage, activates the promoter of the death-promoting transcription factor BCLAF1/Btf to trigger BCLAF1-mediated p53/TP53 gene transcription and apoptosis. In response to oxidative stress, interact with and activate CHUK/IKKA in the nucleus, causing the phosphorylation of p53/TP53. In the case of ER stress or DNA damage-induced apoptosis, can form a complex with the tyrosine-protein kinase ABL1 which trigger apoptosis independently of p53/TP53. In cytosol can trigger apoptosis by activating MAPK11 or MAPK14, inhibiting AKT1 and decreasing the level of X-linked inhibitor of apoptosis protein (XIAP), whereas in nucleus induces apoptosis via the activation of MAPK8 or MAPK9. Upon ionizing radiation treatment, is required for the activation of the apoptosis regulators BAX and BAK, which trigger the mitochondrial cell death pathway. Can phosphorylate MCL1 and target it for degradation which is sufficient to trigger for BAX activation and apoptosis. Is required for the control of cell cycle progression both at G1/S and G2/M phases. Mediates phorbol 12-myristate 13-acetate (PMA)-induced inhibition of cell cycle progression at G1/S phase by up-regulating the CDK inhibitor CDKN1A/p21 and inhibiting the cyclin CCNA2 promoter activity. In response to UV irradiation can phosphorylate CDK1, which is important for the G2/M DNA damage checkpoint activation. Can protect glioma cells from the apoptosis induced by TNFSF10/TRAIL, probably by inducing increased phosphorylation and subsequent activation of AKT1. Can also act as tumor suppressor upon mitogenic stimulation with PMA or TPA. In N-formyl-methionyl-leucyl-phenylalanine (fMLP)-treated cells, is required for NCF1 (p47-phox) phosphorylation and activation of NADPH oxidase activity, and regulates TNF-elicited superoxide anion production in neutrophils, by direct phosphorylation and activation of NCF1 or indirectly through MAPK1/3 (ERK1/2) signaling pathways. Involved in antifungal immunity by mediating phosphorylation and activation of CARD9 downstream of C-type lectin receptors activation, promoting interaction between CARD9 and BCL10, followed by activation of NF-kappa-B and MAP kinase p38 pathways (By similarity). May also play a role in the regulation of NADPH oxidase activity in eosinophil after stimulation with IL5, leukotriene B4 or PMA. In collagen-induced platelet aggregation, acts a negative regulator of filopodia formation and actin polymerization by interacting with and negatively regulating VASP phosphorylation. Downstream of PAR1, PAR4 and CD36/GP4 receptors, regulates differentially platelet dense granule secretion; acts as a positive regulator in PAR-mediated granule secretion, whereas it negatively regulates CD36/GP4-mediated granule release. Phosphorylates MUC1 in the C-terminal and regulates the interaction between MUC1 and beta-catenin (By similarity). The catalytic subunit phosphorylates 14-3-3 proteins (YWHAB, YWHAZ and YWHAH) in a sphingosine-dependent fashion. Phosphorylates ELAVL1 in response to angiotensin-2 treatment (By similarity). Phosphorylates mitochondrial phospholipid scramblase 3 (PLSCR3), resulting in increased cardiolipin expression on the mitochondrial outer membrane which facilitates apoptosis (By similarity). Phosphorylates SMPD1 which induces SMPD1 secretion (By similarity).</text>
</comment>
<comment type="function">
    <text>Truncated isoform 2 is inactive.</text>
</comment>
<comment type="catalytic activity">
    <reaction>
        <text>L-seryl-[protein] + ATP = O-phospho-L-seryl-[protein] + ADP + H(+)</text>
        <dbReference type="Rhea" id="RHEA:17989"/>
        <dbReference type="Rhea" id="RHEA-COMP:9863"/>
        <dbReference type="Rhea" id="RHEA-COMP:11604"/>
        <dbReference type="ChEBI" id="CHEBI:15378"/>
        <dbReference type="ChEBI" id="CHEBI:29999"/>
        <dbReference type="ChEBI" id="CHEBI:30616"/>
        <dbReference type="ChEBI" id="CHEBI:83421"/>
        <dbReference type="ChEBI" id="CHEBI:456216"/>
        <dbReference type="EC" id="2.7.11.13"/>
    </reaction>
</comment>
<comment type="catalytic activity">
    <reaction evidence="3">
        <text>L-threonyl-[protein] + ATP = O-phospho-L-threonyl-[protein] + ADP + H(+)</text>
        <dbReference type="Rhea" id="RHEA:46608"/>
        <dbReference type="Rhea" id="RHEA-COMP:11060"/>
        <dbReference type="Rhea" id="RHEA-COMP:11605"/>
        <dbReference type="ChEBI" id="CHEBI:15378"/>
        <dbReference type="ChEBI" id="CHEBI:30013"/>
        <dbReference type="ChEBI" id="CHEBI:30616"/>
        <dbReference type="ChEBI" id="CHEBI:61977"/>
        <dbReference type="ChEBI" id="CHEBI:456216"/>
        <dbReference type="EC" id="2.7.11.13"/>
    </reaction>
</comment>
<comment type="catalytic activity">
    <reaction evidence="8">
        <text>L-tyrosyl-[protein] + ATP = O-phospho-L-tyrosyl-[protein] + ADP + H(+)</text>
        <dbReference type="Rhea" id="RHEA:10596"/>
        <dbReference type="Rhea" id="RHEA-COMP:10136"/>
        <dbReference type="Rhea" id="RHEA-COMP:20101"/>
        <dbReference type="ChEBI" id="CHEBI:15378"/>
        <dbReference type="ChEBI" id="CHEBI:30616"/>
        <dbReference type="ChEBI" id="CHEBI:46858"/>
        <dbReference type="ChEBI" id="CHEBI:61978"/>
        <dbReference type="ChEBI" id="CHEBI:456216"/>
    </reaction>
</comment>
<comment type="activity regulation">
    <text evidence="9">Novel PKCs (PRKCD, PRKCE, PRKCH and PRKCQ) are calcium-insensitive, but activated by diacylglycerol (DAG) and phosphatidylserine. Three specific sites; Thr-505 (activation loop of the kinase domain), Ser-643 (turn motif) and Ser-662 (hydrophobic region), need to be phosphorylated for its full activation. Activated by caspase-3 (CASP3) cleavage during apoptosis. After cleavage, the pseudosubstrate motif in the regulatory subunit is released from the substrate recognition site of the catalytic subunit, which enables PRKCD to become constitutively activated. The catalytic subunit which displays properties of a sphingosine-dependent protein kinase is activated by D-erythro-sphingosine (Sph) or N,N-dimethyl-D-erythrosphingosine (DMS) or N,N,N-trimethyl-D-erythrosphingosine (TMS), but not by ceramide or Sph-1-P and is strongly inhibited by phosphatidylserine.</text>
</comment>
<comment type="subunit">
    <text evidence="2 3">Interacts with PDPK1 (via N-terminal region). Interacts with RAD9A (By similarity). Interacts with CDCP1. Interacts with MUC1. Interacts with VASP. Interacts with CAVIN3. Interacts with PRKD2 (via N-terminus and zing-finger domain 1 and 2) in response to oxidative stress; the interaction is independent of PRKD2 tyrosine phosphorylation (By similarity). Interacts with PLSC3; interaction is enhanced by UV irradiation (By similarity).</text>
</comment>
<comment type="subcellular location">
    <subcellularLocation>
        <location evidence="10">Cytoplasm</location>
    </subcellularLocation>
    <subcellularLocation>
        <location evidence="10">Nucleus</location>
    </subcellularLocation>
    <subcellularLocation>
        <location evidence="10">Cytoplasm</location>
        <location evidence="10">Perinuclear region</location>
    </subcellularLocation>
    <subcellularLocation>
        <location evidence="3">Cell membrane</location>
        <topology evidence="3">Peripheral membrane protein</topology>
    </subcellularLocation>
    <subcellularLocation>
        <location evidence="3">Mitochondrion</location>
    </subcellularLocation>
    <subcellularLocation>
        <location evidence="3">Endomembrane system</location>
    </subcellularLocation>
    <text evidence="3">Translocates to the mitochondria upon apoptotic stimulation. Upon activation, translocates to the plasma membrane followed by partial location to the endolysosomes.</text>
</comment>
<comment type="alternative products">
    <event type="alternative splicing"/>
    <isoform>
        <id>P09215-1</id>
        <name>1</name>
        <name>PKC-delta-I</name>
        <sequence type="displayed"/>
    </isoform>
    <isoform>
        <id>P09215-2</id>
        <name>2</name>
        <name>PKC-delta-III</name>
        <sequence type="described" ref="VSP_004742"/>
    </isoform>
</comment>
<comment type="domain">
    <text>The C1 domain, containing the phorbol ester/DAG-type region 1 (C1A) and 2 (C1B), is the diacylglycerol sensor.</text>
</comment>
<comment type="domain">
    <text evidence="1">The C2 domain is a non-calcium binding domain. It binds proteins containing phosphotyrosine in a sequence-specific manner (By similarity).</text>
</comment>
<comment type="PTM">
    <text evidence="2 3 10 11 12 13">Autophosphorylated and/or phosphorylated at Thr-505, within the activation loop; phosphorylation at Thr-505 is not a prerequisite for enzymatic activity (PubMed:17569658, PubMed:9677322). Autophosphorylated at Ser-299 (By similarity). Upon TNFSF10/TRAIL treatment, phosphorylated at Tyr-155; phosphorylation is required for its translocation to the endoplasmic reticulum and cleavage by caspase-3 (PubMed:17562707). Phosphorylated at Tyr-311, Tyr-332 and Tyr-565; phosphorylation of Tyr-311 and Tyr-565 following thrombin or zymosan stimulation potentiates its kinase activity (PubMed:18550549). Phosphorylated by protein kinase PDPK1; phosphorylation is inhibited by the apoptotic C-terminal cleavage product of PKN2 (By similarity). Phosphorylated at Tyr-311 and Tyr-332 by SRC; phosphorylation leads to enhanced autophosphorylation at Thr-505 (PubMed:18550549). Phosphorylated at Tyr-311 through a SYK and SRC mechanism downstream of C-type lectin receptors activation, promoting its activation (By similarity).</text>
</comment>
<comment type="PTM">
    <text evidence="9">Proteolytically cleaved into a catalytic subunit and a regulatory subunit by caspase-3 during apoptosis which results in kinase activation.</text>
</comment>
<comment type="similarity">
    <text evidence="15">Belongs to the protein kinase superfamily. AGC Ser/Thr protein kinase family. PKC subfamily.</text>
</comment>
<name>KPCD_RAT</name>
<feature type="chain" id="PRO_0000055696" description="Protein kinase C delta type">
    <location>
        <begin position="1"/>
        <end position="673"/>
    </location>
</feature>
<feature type="chain" id="PRO_0000421671" description="Protein kinase C delta type regulatory subunit">
    <location>
        <begin position="1"/>
        <end position="327"/>
    </location>
</feature>
<feature type="chain" id="PRO_0000421672" description="Protein kinase C delta type catalytic subunit">
    <location>
        <begin position="328"/>
        <end position="673"/>
    </location>
</feature>
<feature type="domain" description="C2" evidence="4">
    <location>
        <begin position="1"/>
        <end position="106"/>
    </location>
</feature>
<feature type="domain" description="Protein kinase" evidence="5">
    <location>
        <begin position="347"/>
        <end position="601"/>
    </location>
</feature>
<feature type="domain" description="AGC-kinase C-terminal" evidence="7">
    <location>
        <begin position="602"/>
        <end position="673"/>
    </location>
</feature>
<feature type="zinc finger region" description="Phorbol-ester/DAG-type 1" evidence="6">
    <location>
        <begin position="158"/>
        <end position="208"/>
    </location>
</feature>
<feature type="zinc finger region" description="Phorbol-ester/DAG-type 2" evidence="6">
    <location>
        <begin position="230"/>
        <end position="280"/>
    </location>
</feature>
<feature type="active site" description="Proton acceptor" evidence="5 8">
    <location>
        <position position="471"/>
    </location>
</feature>
<feature type="binding site" evidence="5">
    <location>
        <begin position="353"/>
        <end position="361"/>
    </location>
    <ligand>
        <name>ATP</name>
        <dbReference type="ChEBI" id="CHEBI:30616"/>
    </ligand>
</feature>
<feature type="binding site" evidence="5">
    <location>
        <position position="376"/>
    </location>
    <ligand>
        <name>ATP</name>
        <dbReference type="ChEBI" id="CHEBI:30616"/>
    </ligand>
</feature>
<feature type="site" description="Interaction with phosphotyrosine-containing peptide" evidence="1">
    <location>
        <position position="48"/>
    </location>
</feature>
<feature type="site" description="Interaction with phosphotyrosine-containing peptide" evidence="1">
    <location>
        <position position="62"/>
    </location>
</feature>
<feature type="site" description="Interaction with phosphotyrosine-containing peptide" evidence="1">
    <location>
        <position position="67"/>
    </location>
</feature>
<feature type="site" description="Interaction with phosphotyrosine-containing peptide" evidence="1">
    <location>
        <position position="123"/>
    </location>
</feature>
<feature type="site" description="Cleavage; by caspase-3" evidence="15">
    <location>
        <begin position="327"/>
        <end position="328"/>
    </location>
</feature>
<feature type="modified residue" description="Phosphothreonine" evidence="2">
    <location>
        <position position="43"/>
    </location>
</feature>
<feature type="modified residue" description="Phosphothreonine" evidence="3">
    <location>
        <position position="50"/>
    </location>
</feature>
<feature type="modified residue" description="Phosphotyrosine" evidence="10">
    <location>
        <position position="64"/>
    </location>
</feature>
<feature type="modified residue" description="Phosphoserine" evidence="3">
    <location>
        <position position="130"/>
    </location>
</feature>
<feature type="modified residue" description="Phosphothreonine" evidence="3">
    <location>
        <position position="141"/>
    </location>
</feature>
<feature type="modified residue" description="Phosphotyrosine" evidence="10">
    <location>
        <position position="155"/>
    </location>
</feature>
<feature type="modified residue" description="Phosphothreonine" evidence="3">
    <location>
        <position position="218"/>
    </location>
</feature>
<feature type="modified residue" description="Phosphoserine; by autocatalysis" evidence="3">
    <location>
        <position position="299"/>
    </location>
</feature>
<feature type="modified residue" description="Phosphotyrosine; by SRC" evidence="12 18">
    <location>
        <position position="311"/>
    </location>
</feature>
<feature type="modified residue" description="Phosphotyrosine; by SRC" evidence="12">
    <location>
        <position position="332"/>
    </location>
</feature>
<feature type="modified residue" description="Phosphotyrosine" evidence="3">
    <location>
        <position position="372"/>
    </location>
</feature>
<feature type="modified residue" description="Phosphothreonine" evidence="3">
    <location>
        <position position="449"/>
    </location>
</feature>
<feature type="modified residue" description="Phosphoserine" evidence="3">
    <location>
        <position position="504"/>
    </location>
</feature>
<feature type="modified residue" description="Phosphothreonine; by autocatalysis" evidence="11 12 13">
    <location>
        <position position="505"/>
    </location>
</feature>
<feature type="modified residue" description="Phosphotyrosine" evidence="3">
    <location>
        <position position="565"/>
    </location>
</feature>
<feature type="modified residue" description="Phosphoserine" evidence="18">
    <location>
        <position position="643"/>
    </location>
</feature>
<feature type="modified residue" description="Phosphoserine" evidence="3">
    <location>
        <position position="652"/>
    </location>
</feature>
<feature type="modified residue" description="Phosphoserine" evidence="17 18">
    <location>
        <position position="662"/>
    </location>
</feature>
<feature type="splice variant" id="VSP_004742" description="In isoform 2." evidence="14">
    <original>DNNGTYGKIWEGSNRCRLENFTFQKVLGKGSFGKVLLAELKGKERYFAIKYLKKDVVLIDDDVECTMVEKRVLALAWENPFLTHLICTFQTKDHLFFVMEFLNGGDLMFHIQDKGRFELYRATFYAAEIICGLQFLHGKGIIYRDLKLDNVMLDKDGHIKIADFGMCKENIFGENRASTFCGTPDYIAPEILQGLKYSFSVDWWSFGVLLYEMLIGQSPFHGDDEDELFESIRVDTPHYPRWITKESKDIMEKLFERDPAKRLGVTGNIRLHPFFKTINWNLLEKRKVEPPFKPKVKSPSDYSNFDPEFLNEKPQLSFSDKNLIDSMDQTAFKGFSFVNPKYEQFLE</original>
    <variation>GESGSHIPLKLPFPDRAREKNSSETWDKTTTGPMARSGRGATGAALRTSPSRKYLAKAALARYCLQN</variation>
    <location>
        <begin position="327"/>
        <end position="673"/>
    </location>
</feature>
<feature type="mutagenesis site" description="Decrease in the phosphorylation level." evidence="13">
    <original>T</original>
    <variation>A</variation>
    <location>
        <position position="505"/>
    </location>
</feature>
<feature type="sequence conflict" description="In Ref. 6; AA sequence." evidence="15" ref="6">
    <original>A</original>
    <variation>S</variation>
    <location>
        <position position="147"/>
    </location>
</feature>
<feature type="sequence conflict" description="In Ref. 2; CAB75578 and 4; AAH76505." evidence="15" ref="2 4">
    <original>T</original>
    <variation>S</variation>
    <location>
        <position position="249"/>
    </location>
</feature>
<feature type="strand" evidence="19">
    <location>
        <begin position="3"/>
        <end position="13"/>
    </location>
</feature>
<feature type="strand" evidence="19">
    <location>
        <begin position="27"/>
        <end position="35"/>
    </location>
</feature>
<feature type="helix" evidence="19">
    <location>
        <begin position="38"/>
        <end position="40"/>
    </location>
</feature>
<feature type="strand" evidence="19">
    <location>
        <begin position="43"/>
        <end position="46"/>
    </location>
</feature>
<feature type="strand" evidence="19">
    <location>
        <begin position="58"/>
        <end position="62"/>
    </location>
</feature>
<feature type="strand" evidence="19">
    <location>
        <begin position="68"/>
        <end position="76"/>
    </location>
</feature>
<feature type="strand" evidence="19">
    <location>
        <begin position="79"/>
        <end position="87"/>
    </location>
</feature>
<feature type="helix" evidence="19">
    <location>
        <begin position="88"/>
        <end position="96"/>
    </location>
</feature>
<feature type="turn" evidence="19">
    <location>
        <begin position="97"/>
        <end position="100"/>
    </location>
</feature>
<feature type="strand" evidence="19">
    <location>
        <begin position="101"/>
        <end position="107"/>
    </location>
</feature>
<feature type="strand" evidence="19">
    <location>
        <begin position="109"/>
        <end position="111"/>
    </location>
</feature>
<feature type="strand" evidence="19">
    <location>
        <begin position="113"/>
        <end position="122"/>
    </location>
</feature>
<feature type="strand" evidence="20">
    <location>
        <begin position="233"/>
        <end position="236"/>
    </location>
</feature>
<feature type="turn" evidence="20">
    <location>
        <begin position="245"/>
        <end position="247"/>
    </location>
</feature>
<feature type="strand" evidence="20">
    <location>
        <begin position="253"/>
        <end position="255"/>
    </location>
</feature>
<feature type="strand" evidence="20">
    <location>
        <begin position="258"/>
        <end position="261"/>
    </location>
</feature>
<feature type="turn" evidence="20">
    <location>
        <begin position="262"/>
        <end position="264"/>
    </location>
</feature>
<feature type="turn" evidence="20">
    <location>
        <begin position="270"/>
        <end position="272"/>
    </location>
</feature>
<feature type="helix" evidence="20">
    <location>
        <begin position="273"/>
        <end position="275"/>
    </location>
</feature>
<reference key="1">
    <citation type="journal article" date="1988" name="J. Biol. Chem.">
        <title>The structure, expression, and properties of additional members of the protein kinase C family.</title>
        <authorList>
            <person name="Ono Y."/>
            <person name="Fujii T."/>
            <person name="Ogita K."/>
            <person name="Kikkawa U."/>
            <person name="Igarashi K."/>
            <person name="Nishizuka Y."/>
        </authorList>
    </citation>
    <scope>NUCLEOTIDE SEQUENCE [MRNA] (ISOFORM 1)</scope>
    <source>
        <tissue>Brain</tissue>
    </source>
</reference>
<reference key="2">
    <citation type="journal article" date="2000" name="Gene">
        <title>Genomic structure and chromosomal localization of the rat PKCdelta-gene.</title>
        <authorList>
            <person name="Kurkinen K.M.A."/>
            <person name="Keinanen R.A."/>
            <person name="Karhu R."/>
            <person name="Koistinaho J."/>
        </authorList>
    </citation>
    <scope>NUCLEOTIDE SEQUENCE [GENOMIC DNA]</scope>
    <source>
        <strain>Wistar Kyoto</strain>
    </source>
</reference>
<reference key="3">
    <citation type="journal article" date="2000" name="Biochem. Biophys. Res. Commun.">
        <title>cDNA cloning of an alternative splicing variant of protein kinase C delta (PKC deltaIII), a new truncated form of PKCdelta, in rats.</title>
        <authorList>
            <person name="Ueyama T."/>
            <person name="Ren Y."/>
            <person name="Ohmori S."/>
            <person name="Sakai K."/>
            <person name="Tamaki N."/>
            <person name="Saito N."/>
        </authorList>
    </citation>
    <scope>NUCLEOTIDE SEQUENCE [MRNA] (ISOFORM 2)</scope>
</reference>
<reference key="4">
    <citation type="journal article" date="2004" name="Genome Res.">
        <title>The status, quality, and expansion of the NIH full-length cDNA project: the Mammalian Gene Collection (MGC).</title>
        <authorList>
            <consortium name="The MGC Project Team"/>
        </authorList>
    </citation>
    <scope>NUCLEOTIDE SEQUENCE [LARGE SCALE MRNA] (ISOFORM 1)</scope>
    <source>
        <tissue>Lung</tissue>
    </source>
</reference>
<reference key="5">
    <citation type="journal article" date="1987" name="FEBS Lett.">
        <title>Identification of three additional members of rat protein kinase C family: delta-, epsilon- and zeta-subspecies.</title>
        <authorList>
            <person name="Ono Y."/>
            <person name="Fujii T."/>
            <person name="Ogita K."/>
            <person name="Kikkawa U."/>
            <person name="Igarashi K."/>
            <person name="Nishizuka Y."/>
        </authorList>
    </citation>
    <scope>NUCLEOTIDE SEQUENCE OF 123-286</scope>
</reference>
<reference key="6">
    <citation type="journal article" date="1991" name="Eur. J. Biochem.">
        <title>Expression and characterization of protein kinase C-delta.</title>
        <authorList>
            <person name="Olivier A.R."/>
            <person name="Parker P.J."/>
        </authorList>
    </citation>
    <scope>PROTEIN SEQUENCE OF 142-153</scope>
</reference>
<reference key="7">
    <citation type="journal article" date="1998" name="Biochem. J.">
        <title>The broad specificity of dominant inhibitory protein kinase C mutants infers a common step in phosphorylation.</title>
        <authorList>
            <person name="Garcia-Paramio P."/>
            <person name="Cabrerizo Y."/>
            <person name="Bornancin F."/>
            <person name="Parker P.J."/>
        </authorList>
    </citation>
    <scope>MUTAGENESIS OF THR-505</scope>
    <scope>PHOSPHORYLATION AT THR-505</scope>
</reference>
<reference key="8">
    <citation type="journal article" date="2003" name="J. Biol. Chem.">
        <title>Sphingosine-dependent protein kinase-1, directed to 14-3-3, is identified as the kinase domain of protein kinase C delta.</title>
        <authorList>
            <person name="Hamaguchi A."/>
            <person name="Suzuki E."/>
            <person name="Murayama K."/>
            <person name="Fujimura T."/>
            <person name="Hikita T."/>
            <person name="Iwabuchi K."/>
            <person name="Handa K."/>
            <person name="Withers D.A."/>
            <person name="Masters S.C."/>
            <person name="Fu H."/>
            <person name="Hakomori S."/>
        </authorList>
    </citation>
    <scope>IDENTIFICATION BY MASS SPECTROMETRY</scope>
    <scope>CLEAVAGE BY CASPASE-3</scope>
    <scope>ACTIVITY REGULATION</scope>
</reference>
<reference key="9">
    <citation type="journal article" date="2006" name="J. Proteome Res.">
        <title>Phosphoproteomic analysis of rat liver by high capacity IMAC and LC-MS/MS.</title>
        <authorList>
            <person name="Moser K."/>
            <person name="White F.M."/>
        </authorList>
    </citation>
    <scope>PHOSPHORYLATION [LARGE SCALE ANALYSIS] AT SER-662</scope>
    <scope>IDENTIFICATION BY MASS SPECTROMETRY [LARGE SCALE ANALYSIS]</scope>
</reference>
<reference key="10">
    <citation type="journal article" date="2007" name="J. Biol. Chem.">
        <title>Induction of apoptosis is driven by nuclear retention of protein kinase C delta.</title>
        <authorList>
            <person name="DeVries-Seimon T.A."/>
            <person name="Ohm A.M."/>
            <person name="Humphries M.J."/>
            <person name="Reyland M.E."/>
        </authorList>
    </citation>
    <scope>SUBCELLULAR LOCATION</scope>
    <scope>PHOSPHORYLATION AT TYR-64 AND TYR-155</scope>
</reference>
<reference key="11">
    <citation type="journal article" date="2007" name="J. Biol. Chem.">
        <title>Protein kinase Cepsilon (PKCepsilon) and Src control PKCdelta activation loop phosphorylation in cardiomyocytes.</title>
        <authorList>
            <person name="Rybin V.O."/>
            <person name="Guo J."/>
            <person name="Gertsberg Z."/>
            <person name="Elouardighi H."/>
            <person name="Steinberg S.F."/>
        </authorList>
    </citation>
    <scope>PHOSPHORYLATION AT THR-505</scope>
</reference>
<reference key="12">
    <citation type="journal article" date="2008" name="J. Biol. Chem.">
        <title>Tyrosine phosphorylation modifies protein kinase C delta-dependent phosphorylation of cardiac troponin I.</title>
        <authorList>
            <person name="Sumandea M.P."/>
            <person name="Rybin V.O."/>
            <person name="Hinken A.C."/>
            <person name="Wang C."/>
            <person name="Kobayashi T."/>
            <person name="Harleton E."/>
            <person name="Sievert G."/>
            <person name="Balke C.W."/>
            <person name="Feinmark S.J."/>
            <person name="Solaro R.J."/>
            <person name="Steinberg S.F."/>
        </authorList>
    </citation>
    <scope>PHOSPHORYLATION AT TYR-311; TYR-332 AND THR-505</scope>
</reference>
<reference key="13">
    <citation type="journal article" date="2012" name="Nat. Commun.">
        <title>Quantitative maps of protein phosphorylation sites across 14 different rat organs and tissues.</title>
        <authorList>
            <person name="Lundby A."/>
            <person name="Secher A."/>
            <person name="Lage K."/>
            <person name="Nordsborg N.B."/>
            <person name="Dmytriyev A."/>
            <person name="Lundby C."/>
            <person name="Olsen J.V."/>
        </authorList>
    </citation>
    <scope>PHOSPHORYLATION [LARGE SCALE ANALYSIS] AT TYR-311; SER-643 AND SER-662</scope>
    <scope>IDENTIFICATION BY MASS SPECTROMETRY [LARGE SCALE ANALYSIS]</scope>
</reference>
<reference key="14">
    <citation type="journal article" date="1998" name="Structure">
        <title>Crystal structure of the C2 domain from protein kinase C-delta.</title>
        <authorList>
            <person name="Pappa H."/>
            <person name="Murray-Rust J."/>
            <person name="Dekker L.V."/>
            <person name="Parker P.J."/>
            <person name="McDonald N.Q."/>
        </authorList>
    </citation>
    <scope>X-RAY CRYSTALLOGRAPHY (2.2 ANGSTROMS) OF 1-123</scope>
</reference>
<protein>
    <recommendedName>
        <fullName evidence="15">Protein kinase C delta type</fullName>
        <ecNumber evidence="3">2.7.11.13</ecNumber>
    </recommendedName>
    <alternativeName>
        <fullName>nPKC-delta</fullName>
    </alternativeName>
    <component>
        <recommendedName>
            <fullName>Protein kinase C delta type regulatory subunit</fullName>
        </recommendedName>
    </component>
    <component>
        <recommendedName>
            <fullName>Protein kinase C delta type catalytic subunit</fullName>
        </recommendedName>
        <alternativeName>
            <fullName>Sphingosine-dependent protein kinase-1</fullName>
            <shortName>SDK1</shortName>
        </alternativeName>
    </component>
</protein>
<proteinExistence type="evidence at protein level"/>
<sequence>MAPFLRISFNSYELGSLQAEDDASQPFCAVKMKEALTTDRGKTLVQKKPTMYPEWKSTFDAHIYEGRVIQIVLMRAAEDPMSEVTVGVSVLAERCKKNNGKAEFWLDLQPQAKVLMCVQYFLEDGDCKQSMRSEEEAMFPTMNRRGAIKQAKIHYIKNHEFIATFFGQPTFCSVCKEFVWGLNKQGYKCRQCNAAIHKKCIDKIIGRCTGTATNSRDTIFQKERFNIDMPHRFKVYNYMSPTFCDHCGTLLWGLVKQGLKCEDCGMNVHHKCREKVANLCGINQKLLAEALNQVTQKASRKPETPETVGIYQGFEKKTAVSGNDIPDNNGTYGKIWEGSNRCRLENFTFQKVLGKGSFGKVLLAELKGKERYFAIKYLKKDVVLIDDDVECTMVEKRVLALAWENPFLTHLICTFQTKDHLFFVMEFLNGGDLMFHIQDKGRFELYRATFYAAEIICGLQFLHGKGIIYRDLKLDNVMLDKDGHIKIADFGMCKENIFGENRASTFCGTPDYIAPEILQGLKYSFSVDWWSFGVLLYEMLIGQSPFHGDDEDELFESIRVDTPHYPRWITKESKDIMEKLFERDPAKRLGVTGNIRLHPFFKTINWNLLEKRKVEPPFKPKVKSPSDYSNFDPEFLNEKPQLSFSDKNLIDSMDQTAFKGFSFVNPKYEQFLE</sequence>
<organism>
    <name type="scientific">Rattus norvegicus</name>
    <name type="common">Rat</name>
    <dbReference type="NCBI Taxonomy" id="10116"/>
    <lineage>
        <taxon>Eukaryota</taxon>
        <taxon>Metazoa</taxon>
        <taxon>Chordata</taxon>
        <taxon>Craniata</taxon>
        <taxon>Vertebrata</taxon>
        <taxon>Euteleostomi</taxon>
        <taxon>Mammalia</taxon>
        <taxon>Eutheria</taxon>
        <taxon>Euarchontoglires</taxon>
        <taxon>Glires</taxon>
        <taxon>Rodentia</taxon>
        <taxon>Myomorpha</taxon>
        <taxon>Muroidea</taxon>
        <taxon>Muridae</taxon>
        <taxon>Murinae</taxon>
        <taxon>Rattus</taxon>
    </lineage>
</organism>
<accession>P09215</accession>
<accession>Q6DG48</accession>
<accession>Q9JK29</accession>
<accession>Q9JL03</accession>